<gene>
    <name type="primary">rpsU</name>
    <name type="ordered locus">VP0407</name>
</gene>
<comment type="similarity">
    <text evidence="2">Belongs to the bacterial ribosomal protein bS21 family.</text>
</comment>
<sequence>MPVVKVRENEPFDVALRRFKRSCEKAGILSEVRRREHYEKPTTVRKRAKAAAQKRHAKKLARENARRVRLY</sequence>
<evidence type="ECO:0000256" key="1">
    <source>
        <dbReference type="SAM" id="MobiDB-lite"/>
    </source>
</evidence>
<evidence type="ECO:0000305" key="2"/>
<reference key="1">
    <citation type="journal article" date="2003" name="Lancet">
        <title>Genome sequence of Vibrio parahaemolyticus: a pathogenic mechanism distinct from that of V. cholerae.</title>
        <authorList>
            <person name="Makino K."/>
            <person name="Oshima K."/>
            <person name="Kurokawa K."/>
            <person name="Yokoyama K."/>
            <person name="Uda T."/>
            <person name="Tagomori K."/>
            <person name="Iijima Y."/>
            <person name="Najima M."/>
            <person name="Nakano M."/>
            <person name="Yamashita A."/>
            <person name="Kubota Y."/>
            <person name="Kimura S."/>
            <person name="Yasunaga T."/>
            <person name="Honda T."/>
            <person name="Shinagawa H."/>
            <person name="Hattori M."/>
            <person name="Iida T."/>
        </authorList>
    </citation>
    <scope>NUCLEOTIDE SEQUENCE [LARGE SCALE GENOMIC DNA]</scope>
    <source>
        <strain>RIMD 2210633</strain>
    </source>
</reference>
<accession>P66533</accession>
<accession>Q9KUJ9</accession>
<organism>
    <name type="scientific">Vibrio parahaemolyticus serotype O3:K6 (strain RIMD 2210633)</name>
    <dbReference type="NCBI Taxonomy" id="223926"/>
    <lineage>
        <taxon>Bacteria</taxon>
        <taxon>Pseudomonadati</taxon>
        <taxon>Pseudomonadota</taxon>
        <taxon>Gammaproteobacteria</taxon>
        <taxon>Vibrionales</taxon>
        <taxon>Vibrionaceae</taxon>
        <taxon>Vibrio</taxon>
    </lineage>
</organism>
<feature type="chain" id="PRO_0000178400" description="Small ribosomal subunit protein bS21">
    <location>
        <begin position="1"/>
        <end position="71"/>
    </location>
</feature>
<feature type="region of interest" description="Disordered" evidence="1">
    <location>
        <begin position="39"/>
        <end position="71"/>
    </location>
</feature>
<feature type="compositionally biased region" description="Basic residues" evidence="1">
    <location>
        <begin position="43"/>
        <end position="59"/>
    </location>
</feature>
<feature type="compositionally biased region" description="Basic and acidic residues" evidence="1">
    <location>
        <begin position="60"/>
        <end position="71"/>
    </location>
</feature>
<keyword id="KW-0687">Ribonucleoprotein</keyword>
<keyword id="KW-0689">Ribosomal protein</keyword>
<dbReference type="EMBL" id="BA000031">
    <property type="protein sequence ID" value="BAC58670.1"/>
    <property type="molecule type" value="Genomic_DNA"/>
</dbReference>
<dbReference type="RefSeq" id="NP_796786.1">
    <property type="nucleotide sequence ID" value="NC_004603.1"/>
</dbReference>
<dbReference type="RefSeq" id="WP_001145625.1">
    <property type="nucleotide sequence ID" value="NC_004603.1"/>
</dbReference>
<dbReference type="SMR" id="P66533"/>
<dbReference type="GeneID" id="97540092"/>
<dbReference type="KEGG" id="vpa:VP0407"/>
<dbReference type="PATRIC" id="fig|223926.6.peg.386"/>
<dbReference type="eggNOG" id="COG0828">
    <property type="taxonomic scope" value="Bacteria"/>
</dbReference>
<dbReference type="HOGENOM" id="CLU_159258_1_0_6"/>
<dbReference type="PRO" id="PR:P66533"/>
<dbReference type="Proteomes" id="UP000002493">
    <property type="component" value="Chromosome 1"/>
</dbReference>
<dbReference type="GO" id="GO:1990904">
    <property type="term" value="C:ribonucleoprotein complex"/>
    <property type="evidence" value="ECO:0007669"/>
    <property type="project" value="UniProtKB-KW"/>
</dbReference>
<dbReference type="GO" id="GO:0005840">
    <property type="term" value="C:ribosome"/>
    <property type="evidence" value="ECO:0007669"/>
    <property type="project" value="UniProtKB-KW"/>
</dbReference>
<dbReference type="GO" id="GO:0003735">
    <property type="term" value="F:structural constituent of ribosome"/>
    <property type="evidence" value="ECO:0007669"/>
    <property type="project" value="InterPro"/>
</dbReference>
<dbReference type="GO" id="GO:0006412">
    <property type="term" value="P:translation"/>
    <property type="evidence" value="ECO:0007669"/>
    <property type="project" value="UniProtKB-UniRule"/>
</dbReference>
<dbReference type="FunFam" id="1.20.5.1150:FF:000001">
    <property type="entry name" value="30S ribosomal protein S21"/>
    <property type="match status" value="1"/>
</dbReference>
<dbReference type="Gene3D" id="1.20.5.1150">
    <property type="entry name" value="Ribosomal protein S8"/>
    <property type="match status" value="1"/>
</dbReference>
<dbReference type="HAMAP" id="MF_00358">
    <property type="entry name" value="Ribosomal_bS21"/>
    <property type="match status" value="1"/>
</dbReference>
<dbReference type="InterPro" id="IPR001911">
    <property type="entry name" value="Ribosomal_bS21"/>
</dbReference>
<dbReference type="InterPro" id="IPR018278">
    <property type="entry name" value="Ribosomal_bS21_CS"/>
</dbReference>
<dbReference type="InterPro" id="IPR038380">
    <property type="entry name" value="Ribosomal_bS21_sf"/>
</dbReference>
<dbReference type="NCBIfam" id="TIGR00030">
    <property type="entry name" value="S21p"/>
    <property type="match status" value="1"/>
</dbReference>
<dbReference type="PANTHER" id="PTHR21109">
    <property type="entry name" value="MITOCHONDRIAL 28S RIBOSOMAL PROTEIN S21"/>
    <property type="match status" value="1"/>
</dbReference>
<dbReference type="PANTHER" id="PTHR21109:SF22">
    <property type="entry name" value="SMALL RIBOSOMAL SUBUNIT PROTEIN BS21"/>
    <property type="match status" value="1"/>
</dbReference>
<dbReference type="Pfam" id="PF01165">
    <property type="entry name" value="Ribosomal_S21"/>
    <property type="match status" value="1"/>
</dbReference>
<dbReference type="PRINTS" id="PR00976">
    <property type="entry name" value="RIBOSOMALS21"/>
</dbReference>
<dbReference type="PROSITE" id="PS01181">
    <property type="entry name" value="RIBOSOMAL_S21"/>
    <property type="match status" value="1"/>
</dbReference>
<proteinExistence type="inferred from homology"/>
<protein>
    <recommendedName>
        <fullName evidence="2">Small ribosomal subunit protein bS21</fullName>
    </recommendedName>
    <alternativeName>
        <fullName>30S ribosomal protein S21</fullName>
    </alternativeName>
</protein>
<name>RS21_VIBPA</name>